<reference key="1">
    <citation type="journal article" date="2018" name="Planta">
        <title>Biochemical characterization of rice xylan O-acetyltransferases.</title>
        <authorList>
            <person name="Zhong R."/>
            <person name="Cui D."/>
            <person name="Dasher R.L."/>
            <person name="Ye Z.H."/>
        </authorList>
    </citation>
    <scope>NUCLEOTIDE SEQUENCE [MRNA]</scope>
    <scope>FUNCTION</scope>
    <scope>CATALYTIC ACTIVITY</scope>
    <scope>TISSUE SPECIFICITY</scope>
</reference>
<reference key="2">
    <citation type="journal article" date="2005" name="Genome Res.">
        <title>Sequence, annotation, and analysis of synteny between rice chromosome 3 and diverged grass species.</title>
        <authorList>
            <consortium name="The rice chromosome 3 sequencing consortium"/>
            <person name="Buell C.R."/>
            <person name="Yuan Q."/>
            <person name="Ouyang S."/>
            <person name="Liu J."/>
            <person name="Zhu W."/>
            <person name="Wang A."/>
            <person name="Maiti R."/>
            <person name="Haas B."/>
            <person name="Wortman J."/>
            <person name="Pertea M."/>
            <person name="Jones K.M."/>
            <person name="Kim M."/>
            <person name="Overton L."/>
            <person name="Tsitrin T."/>
            <person name="Fadrosh D."/>
            <person name="Bera J."/>
            <person name="Weaver B."/>
            <person name="Jin S."/>
            <person name="Johri S."/>
            <person name="Reardon M."/>
            <person name="Webb K."/>
            <person name="Hill J."/>
            <person name="Moffat K."/>
            <person name="Tallon L."/>
            <person name="Van Aken S."/>
            <person name="Lewis M."/>
            <person name="Utterback T."/>
            <person name="Feldblyum T."/>
            <person name="Zismann V."/>
            <person name="Iobst S."/>
            <person name="Hsiao J."/>
            <person name="de Vazeille A.R."/>
            <person name="Salzberg S.L."/>
            <person name="White O."/>
            <person name="Fraser C.M."/>
            <person name="Yu Y."/>
            <person name="Kim H."/>
            <person name="Rambo T."/>
            <person name="Currie J."/>
            <person name="Collura K."/>
            <person name="Kernodle-Thompson S."/>
            <person name="Wei F."/>
            <person name="Kudrna K."/>
            <person name="Ammiraju J.S.S."/>
            <person name="Luo M."/>
            <person name="Goicoechea J.L."/>
            <person name="Wing R.A."/>
            <person name="Henry D."/>
            <person name="Oates R."/>
            <person name="Palmer M."/>
            <person name="Pries G."/>
            <person name="Saski C."/>
            <person name="Simmons J."/>
            <person name="Soderlund C."/>
            <person name="Nelson W."/>
            <person name="de la Bastide M."/>
            <person name="Spiegel L."/>
            <person name="Nascimento L."/>
            <person name="Huang E."/>
            <person name="Preston R."/>
            <person name="Zutavern T."/>
            <person name="Palmer L."/>
            <person name="O'Shaughnessy A."/>
            <person name="Dike S."/>
            <person name="McCombie W.R."/>
            <person name="Minx P."/>
            <person name="Cordum H."/>
            <person name="Wilson R."/>
            <person name="Jin W."/>
            <person name="Lee H.R."/>
            <person name="Jiang J."/>
            <person name="Jackson S."/>
        </authorList>
    </citation>
    <scope>NUCLEOTIDE SEQUENCE [LARGE SCALE GENOMIC DNA]</scope>
    <source>
        <strain>cv. Nipponbare</strain>
    </source>
</reference>
<reference key="3">
    <citation type="journal article" date="2005" name="Nature">
        <title>The map-based sequence of the rice genome.</title>
        <authorList>
            <consortium name="International rice genome sequencing project (IRGSP)"/>
        </authorList>
    </citation>
    <scope>NUCLEOTIDE SEQUENCE [LARGE SCALE GENOMIC DNA]</scope>
    <source>
        <strain>cv. Nipponbare</strain>
    </source>
</reference>
<reference key="4">
    <citation type="journal article" date="2008" name="Nucleic Acids Res.">
        <title>The rice annotation project database (RAP-DB): 2008 update.</title>
        <authorList>
            <consortium name="The rice annotation project (RAP)"/>
        </authorList>
    </citation>
    <scope>GENOME REANNOTATION</scope>
    <source>
        <strain>cv. Nipponbare</strain>
    </source>
</reference>
<reference key="5">
    <citation type="journal article" date="2013" name="Rice">
        <title>Improvement of the Oryza sativa Nipponbare reference genome using next generation sequence and optical map data.</title>
        <authorList>
            <person name="Kawahara Y."/>
            <person name="de la Bastide M."/>
            <person name="Hamilton J.P."/>
            <person name="Kanamori H."/>
            <person name="McCombie W.R."/>
            <person name="Ouyang S."/>
            <person name="Schwartz D.C."/>
            <person name="Tanaka T."/>
            <person name="Wu J."/>
            <person name="Zhou S."/>
            <person name="Childs K.L."/>
            <person name="Davidson R.M."/>
            <person name="Lin H."/>
            <person name="Quesada-Ocampo L."/>
            <person name="Vaillancourt B."/>
            <person name="Sakai H."/>
            <person name="Lee S.S."/>
            <person name="Kim J."/>
            <person name="Numa H."/>
            <person name="Itoh T."/>
            <person name="Buell C.R."/>
            <person name="Matsumoto T."/>
        </authorList>
    </citation>
    <scope>GENOME REANNOTATION</scope>
    <source>
        <strain>cv. Nipponbare</strain>
    </source>
</reference>
<reference key="6">
    <citation type="journal article" date="2005" name="PLoS Biol.">
        <title>The genomes of Oryza sativa: a history of duplications.</title>
        <authorList>
            <person name="Yu J."/>
            <person name="Wang J."/>
            <person name="Lin W."/>
            <person name="Li S."/>
            <person name="Li H."/>
            <person name="Zhou J."/>
            <person name="Ni P."/>
            <person name="Dong W."/>
            <person name="Hu S."/>
            <person name="Zeng C."/>
            <person name="Zhang J."/>
            <person name="Zhang Y."/>
            <person name="Li R."/>
            <person name="Xu Z."/>
            <person name="Li S."/>
            <person name="Li X."/>
            <person name="Zheng H."/>
            <person name="Cong L."/>
            <person name="Lin L."/>
            <person name="Yin J."/>
            <person name="Geng J."/>
            <person name="Li G."/>
            <person name="Shi J."/>
            <person name="Liu J."/>
            <person name="Lv H."/>
            <person name="Li J."/>
            <person name="Wang J."/>
            <person name="Deng Y."/>
            <person name="Ran L."/>
            <person name="Shi X."/>
            <person name="Wang X."/>
            <person name="Wu Q."/>
            <person name="Li C."/>
            <person name="Ren X."/>
            <person name="Wang J."/>
            <person name="Wang X."/>
            <person name="Li D."/>
            <person name="Liu D."/>
            <person name="Zhang X."/>
            <person name="Ji Z."/>
            <person name="Zhao W."/>
            <person name="Sun Y."/>
            <person name="Zhang Z."/>
            <person name="Bao J."/>
            <person name="Han Y."/>
            <person name="Dong L."/>
            <person name="Ji J."/>
            <person name="Chen P."/>
            <person name="Wu S."/>
            <person name="Liu J."/>
            <person name="Xiao Y."/>
            <person name="Bu D."/>
            <person name="Tan J."/>
            <person name="Yang L."/>
            <person name="Ye C."/>
            <person name="Zhang J."/>
            <person name="Xu J."/>
            <person name="Zhou Y."/>
            <person name="Yu Y."/>
            <person name="Zhang B."/>
            <person name="Zhuang S."/>
            <person name="Wei H."/>
            <person name="Liu B."/>
            <person name="Lei M."/>
            <person name="Yu H."/>
            <person name="Li Y."/>
            <person name="Xu H."/>
            <person name="Wei S."/>
            <person name="He X."/>
            <person name="Fang L."/>
            <person name="Zhang Z."/>
            <person name="Zhang Y."/>
            <person name="Huang X."/>
            <person name="Su Z."/>
            <person name="Tong W."/>
            <person name="Li J."/>
            <person name="Tong Z."/>
            <person name="Li S."/>
            <person name="Ye J."/>
            <person name="Wang L."/>
            <person name="Fang L."/>
            <person name="Lei T."/>
            <person name="Chen C.-S."/>
            <person name="Chen H.-C."/>
            <person name="Xu Z."/>
            <person name="Li H."/>
            <person name="Huang H."/>
            <person name="Zhang F."/>
            <person name="Xu H."/>
            <person name="Li N."/>
            <person name="Zhao C."/>
            <person name="Li S."/>
            <person name="Dong L."/>
            <person name="Huang Y."/>
            <person name="Li L."/>
            <person name="Xi Y."/>
            <person name="Qi Q."/>
            <person name="Li W."/>
            <person name="Zhang B."/>
            <person name="Hu W."/>
            <person name="Zhang Y."/>
            <person name="Tian X."/>
            <person name="Jiao Y."/>
            <person name="Liang X."/>
            <person name="Jin J."/>
            <person name="Gao L."/>
            <person name="Zheng W."/>
            <person name="Hao B."/>
            <person name="Liu S.-M."/>
            <person name="Wang W."/>
            <person name="Yuan L."/>
            <person name="Cao M."/>
            <person name="McDermott J."/>
            <person name="Samudrala R."/>
            <person name="Wang J."/>
            <person name="Wong G.K.-S."/>
            <person name="Yang H."/>
        </authorList>
    </citation>
    <scope>NUCLEOTIDE SEQUENCE [LARGE SCALE GENOMIC DNA]</scope>
    <source>
        <strain>cv. Nipponbare</strain>
    </source>
</reference>
<reference key="7">
    <citation type="journal article" date="2003" name="Science">
        <title>Collection, mapping, and annotation of over 28,000 cDNA clones from japonica rice.</title>
        <authorList>
            <consortium name="The rice full-length cDNA consortium"/>
        </authorList>
    </citation>
    <scope>NUCLEOTIDE SEQUENCE [LARGE SCALE MRNA]</scope>
    <source>
        <strain>cv. Nipponbare</strain>
    </source>
</reference>
<reference key="8">
    <citation type="journal article" date="2017" name="Plant Physiol.">
        <title>Two trichome birefringence-like proteins mediate xylan acetylation, which is essential for leaf blight resistance in rice.</title>
        <authorList>
            <person name="Gao Y."/>
            <person name="He C."/>
            <person name="Zhang D."/>
            <person name="Liu X."/>
            <person name="Xu Z."/>
            <person name="Tian Y."/>
            <person name="Liu X.H."/>
            <person name="Zang S."/>
            <person name="Pauly M."/>
            <person name="Zhou Y."/>
            <person name="Zhang B."/>
        </authorList>
    </citation>
    <scope>GENE FAMILY</scope>
    <scope>NOMENCLATURE</scope>
</reference>
<protein>
    <recommendedName>
        <fullName evidence="7">Probable xylan O-acetyltransferase 11</fullName>
        <ecNumber evidence="5">2.3.1.-</ecNumber>
    </recommendedName>
    <alternativeName>
        <fullName evidence="6">Protein trichome birefringence-like 6</fullName>
        <shortName evidence="6">OsTBL6</shortName>
    </alternativeName>
</protein>
<gene>
    <name evidence="7" type="primary">XOAT11</name>
    <name evidence="6" type="synonym">TBL6</name>
    <name evidence="11" type="ordered locus">Os03g0817800</name>
    <name evidence="10" type="ordered locus">LOC_Os03g60340</name>
    <name evidence="12" type="ORF">OsJ_13117</name>
</gene>
<proteinExistence type="evidence at protein level"/>
<name>XOATB_ORYSJ</name>
<keyword id="KW-1015">Disulfide bond</keyword>
<keyword id="KW-0325">Glycoprotein</keyword>
<keyword id="KW-0333">Golgi apparatus</keyword>
<keyword id="KW-0472">Membrane</keyword>
<keyword id="KW-1185">Reference proteome</keyword>
<keyword id="KW-0735">Signal-anchor</keyword>
<keyword id="KW-0808">Transferase</keyword>
<keyword id="KW-0812">Transmembrane</keyword>
<keyword id="KW-1133">Transmembrane helix</keyword>
<organism>
    <name type="scientific">Oryza sativa subsp. japonica</name>
    <name type="common">Rice</name>
    <dbReference type="NCBI Taxonomy" id="39947"/>
    <lineage>
        <taxon>Eukaryota</taxon>
        <taxon>Viridiplantae</taxon>
        <taxon>Streptophyta</taxon>
        <taxon>Embryophyta</taxon>
        <taxon>Tracheophyta</taxon>
        <taxon>Spermatophyta</taxon>
        <taxon>Magnoliopsida</taxon>
        <taxon>Liliopsida</taxon>
        <taxon>Poales</taxon>
        <taxon>Poaceae</taxon>
        <taxon>BOP clade</taxon>
        <taxon>Oryzoideae</taxon>
        <taxon>Oryzeae</taxon>
        <taxon>Oryzinae</taxon>
        <taxon>Oryza</taxon>
        <taxon>Oryza sativa</taxon>
    </lineage>
</organism>
<feature type="chain" id="PRO_5015097024" description="Probable xylan O-acetyltransferase 11">
    <location>
        <begin position="1"/>
        <end position="393"/>
    </location>
</feature>
<feature type="topological domain" description="Cytoplasmic" evidence="8">
    <location>
        <begin position="1"/>
        <end position="9"/>
    </location>
</feature>
<feature type="transmembrane region" description="Helical; Signal-anchor for type II membrane protein" evidence="3">
    <location>
        <begin position="10"/>
        <end position="26"/>
    </location>
</feature>
<feature type="topological domain" description="Lumenal" evidence="8">
    <location>
        <begin position="27"/>
        <end position="393"/>
    </location>
</feature>
<feature type="short sequence motif" description="GDS motif" evidence="9">
    <location>
        <begin position="119"/>
        <end position="121"/>
    </location>
</feature>
<feature type="short sequence motif" description="DXXH motif" evidence="9">
    <location>
        <begin position="363"/>
        <end position="366"/>
    </location>
</feature>
<feature type="active site" description="Nucleophile" evidence="2">
    <location>
        <position position="121"/>
    </location>
</feature>
<feature type="active site" description="Proton donor" evidence="2">
    <location>
        <position position="363"/>
    </location>
</feature>
<feature type="active site" description="Proton acceptor" evidence="2">
    <location>
        <position position="366"/>
    </location>
</feature>
<feature type="glycosylation site" description="N-linked (GlcNAc...) asparagine" evidence="4">
    <location>
        <position position="102"/>
    </location>
</feature>
<feature type="glycosylation site" description="N-linked (GlcNAc...) asparagine" evidence="4">
    <location>
        <position position="325"/>
    </location>
</feature>
<feature type="disulfide bond" evidence="2">
    <location>
        <begin position="45"/>
        <end position="96"/>
    </location>
</feature>
<feature type="disulfide bond" evidence="2">
    <location>
        <begin position="67"/>
        <end position="132"/>
    </location>
</feature>
<feature type="disulfide bond" evidence="2">
    <location>
        <begin position="76"/>
        <end position="368"/>
    </location>
</feature>
<feature type="disulfide bond" evidence="2">
    <location>
        <begin position="283"/>
        <end position="364"/>
    </location>
</feature>
<evidence type="ECO:0000250" key="1">
    <source>
        <dbReference type="UniProtKB" id="Q2QYU2"/>
    </source>
</evidence>
<evidence type="ECO:0000250" key="2">
    <source>
        <dbReference type="UniProtKB" id="Q9LY46"/>
    </source>
</evidence>
<evidence type="ECO:0000255" key="3"/>
<evidence type="ECO:0000255" key="4">
    <source>
        <dbReference type="PROSITE-ProRule" id="PRU00498"/>
    </source>
</evidence>
<evidence type="ECO:0000269" key="5">
    <source>
    </source>
</evidence>
<evidence type="ECO:0000303" key="6">
    <source>
    </source>
</evidence>
<evidence type="ECO:0000303" key="7">
    <source>
    </source>
</evidence>
<evidence type="ECO:0000305" key="8"/>
<evidence type="ECO:0000305" key="9">
    <source>
    </source>
</evidence>
<evidence type="ECO:0000312" key="10">
    <source>
        <dbReference type="EMBL" id="ABF99560.1"/>
    </source>
</evidence>
<evidence type="ECO:0000312" key="11">
    <source>
        <dbReference type="EMBL" id="BAS87059.1"/>
    </source>
</evidence>
<evidence type="ECO:0000312" key="12">
    <source>
        <dbReference type="EMBL" id="EAZ29063.1"/>
    </source>
</evidence>
<comment type="function">
    <text evidence="5">Probable xylan acetyltransferase required for 2-O- and 3-O-monoacetylation of xylosyl residues in xylan (PubMed:29569182). Possesses extremely low activity in vitro (PubMed:29569182).</text>
</comment>
<comment type="subcellular location">
    <subcellularLocation>
        <location evidence="1">Golgi apparatus membrane</location>
        <topology evidence="3">Single-pass type II membrane protein</topology>
    </subcellularLocation>
</comment>
<comment type="tissue specificity">
    <text evidence="5">Expressed in roots, leaves and stems.</text>
</comment>
<comment type="similarity">
    <text evidence="8">Belongs to the PC-esterase family. TBL subfamily.</text>
</comment>
<comment type="sequence caution" evidence="8">
    <conflict type="erroneous gene model prediction">
        <sequence resource="EMBL-CDS" id="BAF13616"/>
    </conflict>
</comment>
<comment type="sequence caution" evidence="8">
    <conflict type="erroneous initiation">
        <sequence resource="EMBL-CDS" id="EAZ29063"/>
    </conflict>
    <text>Truncated N-terminus.</text>
</comment>
<sequence>MHQPAIMQRALAVVALLAAAAAIAAAQGESPELLPFAVGAAPEGCDVGEGEWVFDEAARPWYAEEECPYIQPDLTCQAHGRPDAAYQRWRWQPRDCSLPSFNATGMLEMLRGKRMLFVGDSLLRGQYTSLLCLLHRGAPGGGGGSRSFETVDSLSIFRAKDYDATIEFYWAPMLAESNSDGAAVPDDRLIRGAPMNKHSSFWKGADVLVFNSYLWWMTGDKIQILRGADEDMSKDIVEMEAAEAYRLVLHQVTRWLEGNVDPKSARVFFVTASPSHAGAGGECYDQTTPVGAADAASYCGSTSRRMVQVAGEVLGASRVPVGVVNVTRMSELRRDAHTQVYREQRWAKPTAEQLAADPRSYADCTHWCLPGVPDAWNELLYWKLFFPARDEAI</sequence>
<dbReference type="EC" id="2.3.1.-" evidence="5"/>
<dbReference type="EMBL" id="MH037025">
    <property type="protein sequence ID" value="AVR54515.1"/>
    <property type="molecule type" value="mRNA"/>
</dbReference>
<dbReference type="EMBL" id="DP000009">
    <property type="protein sequence ID" value="ABF99560.1"/>
    <property type="molecule type" value="Genomic_DNA"/>
</dbReference>
<dbReference type="EMBL" id="AP008209">
    <property type="protein sequence ID" value="BAF13616.2"/>
    <property type="status" value="ALT_SEQ"/>
    <property type="molecule type" value="Genomic_DNA"/>
</dbReference>
<dbReference type="EMBL" id="AP014959">
    <property type="protein sequence ID" value="BAS87059.1"/>
    <property type="molecule type" value="Genomic_DNA"/>
</dbReference>
<dbReference type="EMBL" id="CM000140">
    <property type="protein sequence ID" value="EAZ29063.1"/>
    <property type="status" value="ALT_INIT"/>
    <property type="molecule type" value="Genomic_DNA"/>
</dbReference>
<dbReference type="EMBL" id="AK104541">
    <property type="protein sequence ID" value="BAG96769.1"/>
    <property type="molecule type" value="mRNA"/>
</dbReference>
<dbReference type="RefSeq" id="XP_015629851.1">
    <property type="nucleotide sequence ID" value="XM_015774365.1"/>
</dbReference>
<dbReference type="SMR" id="Q10BH4"/>
<dbReference type="GlyCosmos" id="Q10BH4">
    <property type="glycosylation" value="2 sites, No reported glycans"/>
</dbReference>
<dbReference type="PaxDb" id="39947-Q10BH4"/>
<dbReference type="EnsemblPlants" id="Os03t0817800-01">
    <property type="protein sequence ID" value="Os03t0817800-01"/>
    <property type="gene ID" value="Os03g0817800"/>
</dbReference>
<dbReference type="EnsemblPlants" id="Os03t0817800-03">
    <property type="protein sequence ID" value="Os03t0817800-03"/>
    <property type="gene ID" value="Os03g0817800"/>
</dbReference>
<dbReference type="Gramene" id="Os03t0817800-01">
    <property type="protein sequence ID" value="Os03t0817800-01"/>
    <property type="gene ID" value="Os03g0817800"/>
</dbReference>
<dbReference type="Gramene" id="Os03t0817800-03">
    <property type="protein sequence ID" value="Os03t0817800-03"/>
    <property type="gene ID" value="Os03g0817800"/>
</dbReference>
<dbReference type="KEGG" id="dosa:Os03g0817800"/>
<dbReference type="eggNOG" id="ENOG502QTQP">
    <property type="taxonomic scope" value="Eukaryota"/>
</dbReference>
<dbReference type="HOGENOM" id="CLU_020953_3_1_1"/>
<dbReference type="InParanoid" id="Q10BH4"/>
<dbReference type="OMA" id="ATMMLEM"/>
<dbReference type="OrthoDB" id="1932925at2759"/>
<dbReference type="Proteomes" id="UP000000763">
    <property type="component" value="Chromosome 3"/>
</dbReference>
<dbReference type="Proteomes" id="UP000007752">
    <property type="component" value="Chromosome 3"/>
</dbReference>
<dbReference type="Proteomes" id="UP000059680">
    <property type="component" value="Chromosome 3"/>
</dbReference>
<dbReference type="ExpressionAtlas" id="Q10BH4">
    <property type="expression patterns" value="baseline and differential"/>
</dbReference>
<dbReference type="GO" id="GO:0005794">
    <property type="term" value="C:Golgi apparatus"/>
    <property type="evidence" value="ECO:0000318"/>
    <property type="project" value="GO_Central"/>
</dbReference>
<dbReference type="GO" id="GO:0000139">
    <property type="term" value="C:Golgi membrane"/>
    <property type="evidence" value="ECO:0000250"/>
    <property type="project" value="UniProtKB"/>
</dbReference>
<dbReference type="GO" id="GO:0016413">
    <property type="term" value="F:O-acetyltransferase activity"/>
    <property type="evidence" value="ECO:0000318"/>
    <property type="project" value="GO_Central"/>
</dbReference>
<dbReference type="GO" id="GO:1990538">
    <property type="term" value="F:xylan O-acetyltransferase activity"/>
    <property type="evidence" value="ECO:0000314"/>
    <property type="project" value="UniProtKB"/>
</dbReference>
<dbReference type="GO" id="GO:1990937">
    <property type="term" value="P:xylan acetylation"/>
    <property type="evidence" value="ECO:0000314"/>
    <property type="project" value="UniProtKB"/>
</dbReference>
<dbReference type="InterPro" id="IPR029962">
    <property type="entry name" value="TBL"/>
</dbReference>
<dbReference type="InterPro" id="IPR026057">
    <property type="entry name" value="TBL_C"/>
</dbReference>
<dbReference type="InterPro" id="IPR025846">
    <property type="entry name" value="TBL_N"/>
</dbReference>
<dbReference type="PANTHER" id="PTHR32285">
    <property type="entry name" value="PROTEIN TRICHOME BIREFRINGENCE-LIKE 9-RELATED"/>
    <property type="match status" value="1"/>
</dbReference>
<dbReference type="PANTHER" id="PTHR32285:SF67">
    <property type="entry name" value="XYLAN O-ACETYLTRANSFERASE 11-RELATED"/>
    <property type="match status" value="1"/>
</dbReference>
<dbReference type="Pfam" id="PF13839">
    <property type="entry name" value="PC-Esterase"/>
    <property type="match status" value="1"/>
</dbReference>
<dbReference type="Pfam" id="PF14416">
    <property type="entry name" value="PMR5N"/>
    <property type="match status" value="1"/>
</dbReference>
<accession>Q10BH4</accession>
<accession>A0A0P0W574</accession>
<accession>Q84TV7</accession>